<dbReference type="EMBL" id="BA000030">
    <property type="protein sequence ID" value="BAC71999.1"/>
    <property type="molecule type" value="Genomic_DNA"/>
</dbReference>
<dbReference type="SMR" id="P66471"/>
<dbReference type="KEGG" id="sma:SAVERM_4287"/>
<dbReference type="eggNOG" id="COG0238">
    <property type="taxonomic scope" value="Bacteria"/>
</dbReference>
<dbReference type="HOGENOM" id="CLU_148710_2_2_11"/>
<dbReference type="OrthoDB" id="9812008at2"/>
<dbReference type="Proteomes" id="UP000000428">
    <property type="component" value="Chromosome"/>
</dbReference>
<dbReference type="GO" id="GO:0022627">
    <property type="term" value="C:cytosolic small ribosomal subunit"/>
    <property type="evidence" value="ECO:0007669"/>
    <property type="project" value="TreeGrafter"/>
</dbReference>
<dbReference type="GO" id="GO:0070181">
    <property type="term" value="F:small ribosomal subunit rRNA binding"/>
    <property type="evidence" value="ECO:0007669"/>
    <property type="project" value="TreeGrafter"/>
</dbReference>
<dbReference type="GO" id="GO:0003735">
    <property type="term" value="F:structural constituent of ribosome"/>
    <property type="evidence" value="ECO:0007669"/>
    <property type="project" value="InterPro"/>
</dbReference>
<dbReference type="GO" id="GO:0006412">
    <property type="term" value="P:translation"/>
    <property type="evidence" value="ECO:0007669"/>
    <property type="project" value="UniProtKB-UniRule"/>
</dbReference>
<dbReference type="FunFam" id="4.10.640.10:FF:000004">
    <property type="entry name" value="30S ribosomal protein S18"/>
    <property type="match status" value="1"/>
</dbReference>
<dbReference type="Gene3D" id="4.10.640.10">
    <property type="entry name" value="Ribosomal protein S18"/>
    <property type="match status" value="1"/>
</dbReference>
<dbReference type="HAMAP" id="MF_00270">
    <property type="entry name" value="Ribosomal_bS18"/>
    <property type="match status" value="1"/>
</dbReference>
<dbReference type="InterPro" id="IPR001648">
    <property type="entry name" value="Ribosomal_bS18"/>
</dbReference>
<dbReference type="InterPro" id="IPR018275">
    <property type="entry name" value="Ribosomal_bS18_CS"/>
</dbReference>
<dbReference type="InterPro" id="IPR036870">
    <property type="entry name" value="Ribosomal_bS18_sf"/>
</dbReference>
<dbReference type="NCBIfam" id="TIGR00165">
    <property type="entry name" value="S18"/>
    <property type="match status" value="1"/>
</dbReference>
<dbReference type="PANTHER" id="PTHR13479">
    <property type="entry name" value="30S RIBOSOMAL PROTEIN S18"/>
    <property type="match status" value="1"/>
</dbReference>
<dbReference type="PANTHER" id="PTHR13479:SF62">
    <property type="entry name" value="SMALL RIBOSOMAL SUBUNIT PROTEIN BS18A"/>
    <property type="match status" value="1"/>
</dbReference>
<dbReference type="Pfam" id="PF01084">
    <property type="entry name" value="Ribosomal_S18"/>
    <property type="match status" value="1"/>
</dbReference>
<dbReference type="PRINTS" id="PR00974">
    <property type="entry name" value="RIBOSOMALS18"/>
</dbReference>
<dbReference type="SUPFAM" id="SSF46911">
    <property type="entry name" value="Ribosomal protein S18"/>
    <property type="match status" value="1"/>
</dbReference>
<dbReference type="PROSITE" id="PS00057">
    <property type="entry name" value="RIBOSOMAL_S18"/>
    <property type="match status" value="1"/>
</dbReference>
<protein>
    <recommendedName>
        <fullName evidence="1">Small ribosomal subunit protein bS18A</fullName>
    </recommendedName>
    <alternativeName>
        <fullName evidence="2">30S ribosomal protein S18 1</fullName>
    </alternativeName>
</protein>
<sequence>MAKPPVRKPKKKVCAFCKDKVTYVDYKDTNMLRKFISDRGKIRARRVTGNCTQHQRDVATAVKNSREMALLPYTSTAR</sequence>
<feature type="chain" id="PRO_0000111234" description="Small ribosomal subunit protein bS18A">
    <location>
        <begin position="1"/>
        <end position="78"/>
    </location>
</feature>
<evidence type="ECO:0000255" key="1">
    <source>
        <dbReference type="HAMAP-Rule" id="MF_00270"/>
    </source>
</evidence>
<evidence type="ECO:0000305" key="2"/>
<reference key="1">
    <citation type="journal article" date="2001" name="Proc. Natl. Acad. Sci. U.S.A.">
        <title>Genome sequence of an industrial microorganism Streptomyces avermitilis: deducing the ability of producing secondary metabolites.</title>
        <authorList>
            <person name="Omura S."/>
            <person name="Ikeda H."/>
            <person name="Ishikawa J."/>
            <person name="Hanamoto A."/>
            <person name="Takahashi C."/>
            <person name="Shinose M."/>
            <person name="Takahashi Y."/>
            <person name="Horikawa H."/>
            <person name="Nakazawa H."/>
            <person name="Osonoe T."/>
            <person name="Kikuchi H."/>
            <person name="Shiba T."/>
            <person name="Sakaki Y."/>
            <person name="Hattori M."/>
        </authorList>
    </citation>
    <scope>NUCLEOTIDE SEQUENCE [LARGE SCALE GENOMIC DNA]</scope>
    <source>
        <strain>ATCC 31267 / DSM 46492 / JCM 5070 / NBRC 14893 / NCIMB 12804 / NRRL 8165 / MA-4680</strain>
    </source>
</reference>
<reference key="2">
    <citation type="journal article" date="2003" name="Nat. Biotechnol.">
        <title>Complete genome sequence and comparative analysis of the industrial microorganism Streptomyces avermitilis.</title>
        <authorList>
            <person name="Ikeda H."/>
            <person name="Ishikawa J."/>
            <person name="Hanamoto A."/>
            <person name="Shinose M."/>
            <person name="Kikuchi H."/>
            <person name="Shiba T."/>
            <person name="Sakaki Y."/>
            <person name="Hattori M."/>
            <person name="Omura S."/>
        </authorList>
    </citation>
    <scope>NUCLEOTIDE SEQUENCE [LARGE SCALE GENOMIC DNA]</scope>
    <source>
        <strain>ATCC 31267 / DSM 46492 / JCM 5070 / NBRC 14893 / NCIMB 12804 / NRRL 8165 / MA-4680</strain>
    </source>
</reference>
<gene>
    <name evidence="1" type="primary">rpsR1</name>
    <name type="ordered locus">SAV_4287</name>
</gene>
<organism>
    <name type="scientific">Streptomyces avermitilis (strain ATCC 31267 / DSM 46492 / JCM 5070 / NBRC 14893 / NCIMB 12804 / NRRL 8165 / MA-4680)</name>
    <dbReference type="NCBI Taxonomy" id="227882"/>
    <lineage>
        <taxon>Bacteria</taxon>
        <taxon>Bacillati</taxon>
        <taxon>Actinomycetota</taxon>
        <taxon>Actinomycetes</taxon>
        <taxon>Kitasatosporales</taxon>
        <taxon>Streptomycetaceae</taxon>
        <taxon>Streptomyces</taxon>
    </lineage>
</organism>
<keyword id="KW-1185">Reference proteome</keyword>
<keyword id="KW-0687">Ribonucleoprotein</keyword>
<keyword id="KW-0689">Ribosomal protein</keyword>
<keyword id="KW-0694">RNA-binding</keyword>
<keyword id="KW-0699">rRNA-binding</keyword>
<comment type="function">
    <text evidence="1">Binds as a heterodimer with protein bS6 to the central domain of the 16S rRNA, where it helps stabilize the platform of the 30S subunit.</text>
</comment>
<comment type="subunit">
    <text evidence="1">Part of the 30S ribosomal subunit. Forms a tight heterodimer with protein bS6.</text>
</comment>
<comment type="similarity">
    <text evidence="1">Belongs to the bacterial ribosomal protein bS18 family.</text>
</comment>
<proteinExistence type="inferred from homology"/>
<name>RS181_STRAW</name>
<accession>P66471</accession>
<accession>Q9X8U4</accession>